<accession>Q969L2</accession>
<accession>B2R520</accession>
<accession>Q6ZMD9</accession>
<gene>
    <name type="primary">MAL2</name>
</gene>
<proteinExistence type="evidence at protein level"/>
<comment type="function">
    <text evidence="4">Member of the machinery of polarized transport. Required for the indirect transcytotic route at the step of the egress of the transcytosing cargo from perinuclear endosomes in order for it to travel to the apical surface via a raft-dependent pathway.</text>
</comment>
<comment type="subunit">
    <text evidence="3">Interacts with TPD52L2.</text>
</comment>
<comment type="interaction">
    <interactant intactId="EBI-944295">
        <id>Q969L2</id>
    </interactant>
    <interactant intactId="EBI-13059134">
        <id>Q13520</id>
        <label>AQP6</label>
    </interactant>
    <organismsDiffer>false</organismsDiffer>
    <experiments>3</experiments>
</comment>
<comment type="interaction">
    <interactant intactId="EBI-944295">
        <id>Q969L2</id>
    </interactant>
    <interactant intactId="EBI-638194">
        <id>P53365</id>
        <label>ARFIP2</label>
    </interactant>
    <organismsDiffer>false</organismsDiffer>
    <experiments>6</experiments>
</comment>
<comment type="interaction">
    <interactant intactId="EBI-944295">
        <id>Q969L2</id>
    </interactant>
    <interactant intactId="EBI-11343438">
        <id>Q3SXY8</id>
        <label>ARL13B</label>
    </interactant>
    <organismsDiffer>false</organismsDiffer>
    <experiments>3</experiments>
</comment>
<comment type="interaction">
    <interactant intactId="EBI-944295">
        <id>Q969L2</id>
    </interactant>
    <interactant intactId="EBI-12935759">
        <id>O15342</id>
        <label>ATP6V0E1</label>
    </interactant>
    <organismsDiffer>false</organismsDiffer>
    <experiments>3</experiments>
</comment>
<comment type="interaction">
    <interactant intactId="EBI-944295">
        <id>Q969L2</id>
    </interactant>
    <interactant intactId="EBI-718729">
        <id>P55212</id>
        <label>CASP6</label>
    </interactant>
    <organismsDiffer>false</organismsDiffer>
    <experiments>3</experiments>
</comment>
<comment type="interaction">
    <interactant intactId="EBI-944295">
        <id>Q969L2</id>
    </interactant>
    <interactant intactId="EBI-4314390">
        <id>O95971</id>
        <label>CD160</label>
    </interactant>
    <organismsDiffer>false</organismsDiffer>
    <experiments>3</experiments>
</comment>
<comment type="interaction">
    <interactant intactId="EBI-944295">
        <id>Q969L2</id>
    </interactant>
    <interactant intactId="EBI-2826276">
        <id>P34810</id>
        <label>CD68</label>
    </interactant>
    <organismsDiffer>false</organismsDiffer>
    <experiments>3</experiments>
</comment>
<comment type="interaction">
    <interactant intactId="EBI-944295">
        <id>Q969L2</id>
    </interactant>
    <interactant intactId="EBI-745535">
        <id>Q8NI60</id>
        <label>COQ8A</label>
    </interactant>
    <organismsDiffer>false</organismsDiffer>
    <experiments>5</experiments>
</comment>
<comment type="interaction">
    <interactant intactId="EBI-944295">
        <id>Q969L2</id>
    </interactant>
    <interactant intactId="EBI-6942903">
        <id>Q96BA8</id>
        <label>CREB3L1</label>
    </interactant>
    <organismsDiffer>false</organismsDiffer>
    <experiments>3</experiments>
</comment>
<comment type="interaction">
    <interactant intactId="EBI-944295">
        <id>Q969L2</id>
    </interactant>
    <interactant intactId="EBI-521451">
        <id>Q5VYK3</id>
        <label>ECPAS</label>
    </interactant>
    <organismsDiffer>false</organismsDiffer>
    <experiments>5</experiments>
</comment>
<comment type="interaction">
    <interactant intactId="EBI-944295">
        <id>Q969L2</id>
    </interactant>
    <interactant intactId="EBI-10298603">
        <id>Q9BU27</id>
        <label>FAM3A</label>
    </interactant>
    <organismsDiffer>false</organismsDiffer>
    <experiments>3</experiments>
</comment>
<comment type="interaction">
    <interactant intactId="EBI-944295">
        <id>Q969L2</id>
    </interactant>
    <interactant intactId="EBI-16430771">
        <id>A0A0S2Z4D9</id>
        <label>GAD1</label>
    </interactant>
    <organismsDiffer>false</organismsDiffer>
    <experiments>3</experiments>
</comment>
<comment type="interaction">
    <interactant intactId="EBI-944295">
        <id>Q969L2</id>
    </interactant>
    <interactant intactId="EBI-743184">
        <id>Q99259</id>
        <label>GAD1</label>
    </interactant>
    <organismsDiffer>false</organismsDiffer>
    <experiments>6</experiments>
</comment>
<comment type="interaction">
    <interactant intactId="EBI-944295">
        <id>Q969L2</id>
    </interactant>
    <interactant intactId="EBI-9304251">
        <id>Q05329</id>
        <label>GAD2</label>
    </interactant>
    <organismsDiffer>false</organismsDiffer>
    <experiments>6</experiments>
</comment>
<comment type="interaction">
    <interactant intactId="EBI-944295">
        <id>Q969L2</id>
    </interactant>
    <interactant intactId="EBI-17565645">
        <id>P08034</id>
        <label>GJB1</label>
    </interactant>
    <organismsDiffer>false</organismsDiffer>
    <experiments>3</experiments>
</comment>
<comment type="interaction">
    <interactant intactId="EBI-944295">
        <id>Q969L2</id>
    </interactant>
    <interactant intactId="EBI-13345167">
        <id>Q8TDT2</id>
        <label>GPR152</label>
    </interactant>
    <organismsDiffer>false</organismsDiffer>
    <experiments>3</experiments>
</comment>
<comment type="interaction">
    <interactant intactId="EBI-944295">
        <id>Q969L2</id>
    </interactant>
    <interactant intactId="EBI-947253">
        <id>Q9UBD0</id>
        <label>HSFX2</label>
    </interactant>
    <organismsDiffer>false</organismsDiffer>
    <experiments>3</experiments>
</comment>
<comment type="interaction">
    <interactant intactId="EBI-944295">
        <id>Q969L2</id>
    </interactant>
    <interactant intactId="EBI-21591415">
        <id>P13473-2</id>
        <label>LAMP2</label>
    </interactant>
    <organismsDiffer>false</organismsDiffer>
    <experiments>3</experiments>
</comment>
<comment type="interaction">
    <interactant intactId="EBI-944295">
        <id>Q969L2</id>
    </interactant>
    <interactant intactId="EBI-740987">
        <id>Q9NQG6</id>
        <label>MIEF1</label>
    </interactant>
    <organismsDiffer>false</organismsDiffer>
    <experiments>3</experiments>
</comment>
<comment type="interaction">
    <interactant intactId="EBI-944295">
        <id>Q969L2</id>
    </interactant>
    <interactant intactId="EBI-5454865">
        <id>Q6IN84</id>
        <label>MRM1</label>
    </interactant>
    <organismsDiffer>false</organismsDiffer>
    <experiments>3</experiments>
</comment>
<comment type="interaction">
    <interactant intactId="EBI-944295">
        <id>Q969L2</id>
    </interactant>
    <interactant intactId="EBI-7825321">
        <id>Q96E29</id>
        <label>MTERF3</label>
    </interactant>
    <organismsDiffer>false</organismsDiffer>
    <experiments>3</experiments>
</comment>
<comment type="interaction">
    <interactant intactId="EBI-944295">
        <id>Q969L2</id>
    </interactant>
    <interactant intactId="EBI-17263240">
        <id>P15941-11</id>
        <label>MUC1</label>
    </interactant>
    <organismsDiffer>false</organismsDiffer>
    <experiments>3</experiments>
</comment>
<comment type="interaction">
    <interactant intactId="EBI-944295">
        <id>Q969L2</id>
    </interactant>
    <interactant intactId="EBI-709754">
        <id>Q9HB07</id>
        <label>MYG1</label>
    </interactant>
    <organismsDiffer>false</organismsDiffer>
    <experiments>3</experiments>
</comment>
<comment type="interaction">
    <interactant intactId="EBI-944295">
        <id>Q969L2</id>
    </interactant>
    <interactant intactId="EBI-11978907">
        <id>Q9ULP0-2</id>
        <label>NDRG4</label>
    </interactant>
    <organismsDiffer>false</organismsDiffer>
    <experiments>8</experiments>
</comment>
<comment type="interaction">
    <interactant intactId="EBI-944295">
        <id>Q969L2</id>
    </interactant>
    <interactant intactId="EBI-11990542">
        <id>Q8NET5</id>
        <label>NFAM1</label>
    </interactant>
    <organismsDiffer>false</organismsDiffer>
    <experiments>3</experiments>
</comment>
<comment type="interaction">
    <interactant intactId="EBI-944295">
        <id>Q969L2</id>
    </interactant>
    <interactant intactId="EBI-10244393">
        <id>Q5JS98</id>
        <label>PBX3</label>
    </interactant>
    <organismsDiffer>false</organismsDiffer>
    <experiments>3</experiments>
</comment>
<comment type="interaction">
    <interactant intactId="EBI-944295">
        <id>Q969L2</id>
    </interactant>
    <interactant intactId="EBI-741171">
        <id>Q96AL5</id>
        <label>PBX3</label>
    </interactant>
    <organismsDiffer>false</organismsDiffer>
    <experiments>3</experiments>
</comment>
<comment type="interaction">
    <interactant intactId="EBI-944295">
        <id>Q969L2</id>
    </interactant>
    <interactant intactId="EBI-2568609">
        <id>Q9BSJ6</id>
        <label>PIMREG</label>
    </interactant>
    <organismsDiffer>false</organismsDiffer>
    <experiments>3</experiments>
</comment>
<comment type="interaction">
    <interactant intactId="EBI-944295">
        <id>Q969L2</id>
    </interactant>
    <interactant intactId="EBI-14223623">
        <id>Q9UKF7-2</id>
        <label>PITPNC1</label>
    </interactant>
    <organismsDiffer>false</organismsDiffer>
    <experiments>3</experiments>
</comment>
<comment type="interaction">
    <interactant intactId="EBI-944295">
        <id>Q969L2</id>
    </interactant>
    <interactant intactId="EBI-10320765">
        <id>Q9UGP5-2</id>
        <label>POLL</label>
    </interactant>
    <organismsDiffer>false</organismsDiffer>
    <experiments>3</experiments>
</comment>
<comment type="interaction">
    <interactant intactId="EBI-944295">
        <id>Q969L2</id>
    </interactant>
    <interactant intactId="EBI-742898">
        <id>P43378</id>
        <label>PTPN9</label>
    </interactant>
    <organismsDiffer>false</organismsDiffer>
    <experiments>4</experiments>
</comment>
<comment type="interaction">
    <interactant intactId="EBI-944295">
        <id>Q969L2</id>
    </interactant>
    <interactant intactId="EBI-10250413">
        <id>Q6IQ43</id>
        <label>PTPN9</label>
    </interactant>
    <organismsDiffer>false</organismsDiffer>
    <experiments>3</experiments>
</comment>
<comment type="interaction">
    <interactant intactId="EBI-944295">
        <id>Q969L2</id>
    </interactant>
    <interactant intactId="EBI-748121">
        <id>Q96AX2</id>
        <label>RAB37</label>
    </interactant>
    <organismsDiffer>false</organismsDiffer>
    <experiments>3</experiments>
</comment>
<comment type="interaction">
    <interactant intactId="EBI-944295">
        <id>Q969L2</id>
    </interactant>
    <interactant intactId="EBI-7545592">
        <id>Q9H6H4</id>
        <label>REEP4</label>
    </interactant>
    <organismsDiffer>false</organismsDiffer>
    <experiments>3</experiments>
</comment>
<comment type="interaction">
    <interactant intactId="EBI-944295">
        <id>Q969L2</id>
    </interactant>
    <interactant intactId="EBI-10192441">
        <id>Q86VR2</id>
        <label>RETREG3</label>
    </interactant>
    <organismsDiffer>false</organismsDiffer>
    <experiments>3</experiments>
</comment>
<comment type="interaction">
    <interactant intactId="EBI-944295">
        <id>Q969L2</id>
    </interactant>
    <interactant intactId="EBI-16432654">
        <id>A8MRB1</id>
        <label>S100B</label>
    </interactant>
    <organismsDiffer>false</organismsDiffer>
    <experiments>3</experiments>
</comment>
<comment type="interaction">
    <interactant intactId="EBI-944295">
        <id>Q969L2</id>
    </interactant>
    <interactant intactId="EBI-17247926">
        <id>Q9NY72</id>
        <label>SCN3B</label>
    </interactant>
    <organismsDiffer>false</organismsDiffer>
    <experiments>3</experiments>
</comment>
<comment type="interaction">
    <interactant intactId="EBI-944295">
        <id>Q969L2</id>
    </interactant>
    <interactant intactId="EBI-1042854">
        <id>O00141</id>
        <label>SGK1</label>
    </interactant>
    <organismsDiffer>false</organismsDiffer>
    <experiments>3</experiments>
</comment>
<comment type="interaction">
    <interactant intactId="EBI-944295">
        <id>Q969L2</id>
    </interactant>
    <interactant intactId="EBI-10173690">
        <id>Q6FGM0</id>
        <label>SH3GL1</label>
    </interactant>
    <organismsDiffer>false</organismsDiffer>
    <experiments>3</experiments>
</comment>
<comment type="interaction">
    <interactant intactId="EBI-944295">
        <id>Q969L2</id>
    </interactant>
    <interactant intactId="EBI-697911">
        <id>Q99961</id>
        <label>SH3GL1</label>
    </interactant>
    <organismsDiffer>false</organismsDiffer>
    <experiments>5</experiments>
</comment>
<comment type="interaction">
    <interactant intactId="EBI-944295">
        <id>Q969L2</id>
    </interactant>
    <interactant intactId="EBI-2623095">
        <id>Q9Y371</id>
        <label>SH3GLB1</label>
    </interactant>
    <organismsDiffer>false</organismsDiffer>
    <experiments>6</experiments>
</comment>
<comment type="interaction">
    <interactant intactId="EBI-944295">
        <id>Q969L2</id>
    </interactant>
    <interactant intactId="EBI-352908">
        <id>P34897</id>
        <label>SHMT2</label>
    </interactant>
    <organismsDiffer>false</organismsDiffer>
    <experiments>3</experiments>
</comment>
<comment type="interaction">
    <interactant intactId="EBI-944295">
        <id>Q969L2</id>
    </interactant>
    <interactant intactId="EBI-17295964">
        <id>Q9NQQ7-3</id>
        <label>SLC35C2</label>
    </interactant>
    <organismsDiffer>false</organismsDiffer>
    <experiments>3</experiments>
</comment>
<comment type="interaction">
    <interactant intactId="EBI-944295">
        <id>Q969L2</id>
    </interactant>
    <interactant intactId="EBI-2269898">
        <id>Q9P2R7</id>
        <label>SUCLA2</label>
    </interactant>
    <organismsDiffer>false</organismsDiffer>
    <experiments>3</experiments>
</comment>
<comment type="interaction">
    <interactant intactId="EBI-944295">
        <id>Q969L2</id>
    </interactant>
    <interactant intactId="EBI-1045099">
        <id>Q9BW92</id>
        <label>TARS2</label>
    </interactant>
    <organismsDiffer>false</organismsDiffer>
    <experiments>3</experiments>
</comment>
<comment type="interaction">
    <interactant intactId="EBI-944295">
        <id>Q969L2</id>
    </interactant>
    <interactant intactId="EBI-702328">
        <id>Q969Z0</id>
        <label>TBRG4</label>
    </interactant>
    <organismsDiffer>false</organismsDiffer>
    <experiments>3</experiments>
</comment>
<comment type="interaction">
    <interactant intactId="EBI-944295">
        <id>Q969L2</id>
    </interactant>
    <interactant intactId="EBI-726691">
        <id>Q8WY91</id>
        <label>THAP4</label>
    </interactant>
    <organismsDiffer>false</organismsDiffer>
    <experiments>5</experiments>
</comment>
<comment type="interaction">
    <interactant intactId="EBI-944295">
        <id>Q969L2</id>
    </interactant>
    <interactant intactId="EBI-8638294">
        <id>Q9NUH8</id>
        <label>TMEM14B</label>
    </interactant>
    <organismsDiffer>false</organismsDiffer>
    <experiments>3</experiments>
</comment>
<comment type="interaction">
    <interactant intactId="EBI-944295">
        <id>Q969L2</id>
    </interactant>
    <interactant intactId="EBI-10210710">
        <id>P49638</id>
        <label>TTPA</label>
    </interactant>
    <organismsDiffer>false</organismsDiffer>
    <experiments>5</experiments>
</comment>
<comment type="interaction">
    <interactant intactId="EBI-944295">
        <id>Q969L2</id>
    </interactant>
    <interactant intactId="EBI-10245038">
        <id>Q5SU16</id>
        <label>TUBB</label>
    </interactant>
    <organismsDiffer>false</organismsDiffer>
    <experiments>3</experiments>
</comment>
<comment type="interaction">
    <interactant intactId="EBI-944295">
        <id>Q969L2</id>
    </interactant>
    <interactant intactId="EBI-10244969">
        <id>Q5ST30-3</id>
        <label>VARS2</label>
    </interactant>
    <organismsDiffer>false</organismsDiffer>
    <experiments>3</experiments>
</comment>
<comment type="subcellular location">
    <subcellularLocation>
        <location>Cell membrane</location>
        <topology>Multi-pass membrane protein</topology>
    </subcellularLocation>
    <subcellularLocation>
        <location>Apical cell membrane</location>
        <topology>Multi-pass membrane protein</topology>
    </subcellularLocation>
    <subcellularLocation>
        <location>Endomembrane system</location>
    </subcellularLocation>
    <subcellularLocation>
        <location>Cytoplasm</location>
        <location>Perinuclear region</location>
    </subcellularLocation>
    <text>Associated with lipid rafts. In polarized epithelial cells, restricted to the apical surface. In hepatocytes, as well as in polarized hepatoma Hep-G2 cells, found in the canalicular membrane, equivalent to the apical surface, beneath the canalicular actin cytoskeleton. In non-polarized Hep-G2 cells, distributed to the perinuclear region.</text>
</comment>
<comment type="tissue specificity">
    <text evidence="3 5">Predominantly expressed in kidney, lung, and liver. Also found in thyroid gland, stomach and, at lower levels in testis and small intestine.</text>
</comment>
<comment type="similarity">
    <text evidence="7">Belongs to the MAL family.</text>
</comment>
<comment type="sequence caution" evidence="7">
    <conflict type="frameshift">
        <sequence resource="EMBL-CDS" id="BAD18789"/>
    </conflict>
</comment>
<reference key="1">
    <citation type="journal article" date="2001" name="Genomics">
        <title>Identification of MAL2, a novel member of the mal proteolipid family, though interactions with TPD52-like proteins in the yeast two-hybrid system.</title>
        <authorList>
            <person name="Wilson S.H.D."/>
            <person name="Bailey A.M."/>
            <person name="Nourse C.R."/>
            <person name="Mattei M.-G."/>
            <person name="Byrne J.A."/>
        </authorList>
    </citation>
    <scope>NUCLEOTIDE SEQUENCE [MRNA]</scope>
    <scope>TISSUE SPECIFICITY</scope>
    <scope>INTERACTION WITH TPD52L2</scope>
</reference>
<reference key="2">
    <citation type="journal article" date="2004" name="Nat. Genet.">
        <title>Complete sequencing and characterization of 21,243 full-length human cDNAs.</title>
        <authorList>
            <person name="Ota T."/>
            <person name="Suzuki Y."/>
            <person name="Nishikawa T."/>
            <person name="Otsuki T."/>
            <person name="Sugiyama T."/>
            <person name="Irie R."/>
            <person name="Wakamatsu A."/>
            <person name="Hayashi K."/>
            <person name="Sato H."/>
            <person name="Nagai K."/>
            <person name="Kimura K."/>
            <person name="Makita H."/>
            <person name="Sekine M."/>
            <person name="Obayashi M."/>
            <person name="Nishi T."/>
            <person name="Shibahara T."/>
            <person name="Tanaka T."/>
            <person name="Ishii S."/>
            <person name="Yamamoto J."/>
            <person name="Saito K."/>
            <person name="Kawai Y."/>
            <person name="Isono Y."/>
            <person name="Nakamura Y."/>
            <person name="Nagahari K."/>
            <person name="Murakami K."/>
            <person name="Yasuda T."/>
            <person name="Iwayanagi T."/>
            <person name="Wagatsuma M."/>
            <person name="Shiratori A."/>
            <person name="Sudo H."/>
            <person name="Hosoiri T."/>
            <person name="Kaku Y."/>
            <person name="Kodaira H."/>
            <person name="Kondo H."/>
            <person name="Sugawara M."/>
            <person name="Takahashi M."/>
            <person name="Kanda K."/>
            <person name="Yokoi T."/>
            <person name="Furuya T."/>
            <person name="Kikkawa E."/>
            <person name="Omura Y."/>
            <person name="Abe K."/>
            <person name="Kamihara K."/>
            <person name="Katsuta N."/>
            <person name="Sato K."/>
            <person name="Tanikawa M."/>
            <person name="Yamazaki M."/>
            <person name="Ninomiya K."/>
            <person name="Ishibashi T."/>
            <person name="Yamashita H."/>
            <person name="Murakawa K."/>
            <person name="Fujimori K."/>
            <person name="Tanai H."/>
            <person name="Kimata M."/>
            <person name="Watanabe M."/>
            <person name="Hiraoka S."/>
            <person name="Chiba Y."/>
            <person name="Ishida S."/>
            <person name="Ono Y."/>
            <person name="Takiguchi S."/>
            <person name="Watanabe S."/>
            <person name="Yosida M."/>
            <person name="Hotuta T."/>
            <person name="Kusano J."/>
            <person name="Kanehori K."/>
            <person name="Takahashi-Fujii A."/>
            <person name="Hara H."/>
            <person name="Tanase T.-O."/>
            <person name="Nomura Y."/>
            <person name="Togiya S."/>
            <person name="Komai F."/>
            <person name="Hara R."/>
            <person name="Takeuchi K."/>
            <person name="Arita M."/>
            <person name="Imose N."/>
            <person name="Musashino K."/>
            <person name="Yuuki H."/>
            <person name="Oshima A."/>
            <person name="Sasaki N."/>
            <person name="Aotsuka S."/>
            <person name="Yoshikawa Y."/>
            <person name="Matsunawa H."/>
            <person name="Ichihara T."/>
            <person name="Shiohata N."/>
            <person name="Sano S."/>
            <person name="Moriya S."/>
            <person name="Momiyama H."/>
            <person name="Satoh N."/>
            <person name="Takami S."/>
            <person name="Terashima Y."/>
            <person name="Suzuki O."/>
            <person name="Nakagawa S."/>
            <person name="Senoh A."/>
            <person name="Mizoguchi H."/>
            <person name="Goto Y."/>
            <person name="Shimizu F."/>
            <person name="Wakebe H."/>
            <person name="Hishigaki H."/>
            <person name="Watanabe T."/>
            <person name="Sugiyama A."/>
            <person name="Takemoto M."/>
            <person name="Kawakami B."/>
            <person name="Yamazaki M."/>
            <person name="Watanabe K."/>
            <person name="Kumagai A."/>
            <person name="Itakura S."/>
            <person name="Fukuzumi Y."/>
            <person name="Fujimori Y."/>
            <person name="Komiyama M."/>
            <person name="Tashiro H."/>
            <person name="Tanigami A."/>
            <person name="Fujiwara T."/>
            <person name="Ono T."/>
            <person name="Yamada K."/>
            <person name="Fujii Y."/>
            <person name="Ozaki K."/>
            <person name="Hirao M."/>
            <person name="Ohmori Y."/>
            <person name="Kawabata A."/>
            <person name="Hikiji T."/>
            <person name="Kobatake N."/>
            <person name="Inagaki H."/>
            <person name="Ikema Y."/>
            <person name="Okamoto S."/>
            <person name="Okitani R."/>
            <person name="Kawakami T."/>
            <person name="Noguchi S."/>
            <person name="Itoh T."/>
            <person name="Shigeta K."/>
            <person name="Senba T."/>
            <person name="Matsumura K."/>
            <person name="Nakajima Y."/>
            <person name="Mizuno T."/>
            <person name="Morinaga M."/>
            <person name="Sasaki M."/>
            <person name="Togashi T."/>
            <person name="Oyama M."/>
            <person name="Hata H."/>
            <person name="Watanabe M."/>
            <person name="Komatsu T."/>
            <person name="Mizushima-Sugano J."/>
            <person name="Satoh T."/>
            <person name="Shirai Y."/>
            <person name="Takahashi Y."/>
            <person name="Nakagawa K."/>
            <person name="Okumura K."/>
            <person name="Nagase T."/>
            <person name="Nomura N."/>
            <person name="Kikuchi H."/>
            <person name="Masuho Y."/>
            <person name="Yamashita R."/>
            <person name="Nakai K."/>
            <person name="Yada T."/>
            <person name="Nakamura Y."/>
            <person name="Ohara O."/>
            <person name="Isogai T."/>
            <person name="Sugano S."/>
        </authorList>
    </citation>
    <scope>NUCLEOTIDE SEQUENCE [LARGE SCALE MRNA]</scope>
    <source>
        <tissue>Brain</tissue>
    </source>
</reference>
<reference key="3">
    <citation type="submission" date="2005-07" db="EMBL/GenBank/DDBJ databases">
        <authorList>
            <person name="Mural R.J."/>
            <person name="Istrail S."/>
            <person name="Sutton G.G."/>
            <person name="Florea L."/>
            <person name="Halpern A.L."/>
            <person name="Mobarry C.M."/>
            <person name="Lippert R."/>
            <person name="Walenz B."/>
            <person name="Shatkay H."/>
            <person name="Dew I."/>
            <person name="Miller J.R."/>
            <person name="Flanigan M.J."/>
            <person name="Edwards N.J."/>
            <person name="Bolanos R."/>
            <person name="Fasulo D."/>
            <person name="Halldorsson B.V."/>
            <person name="Hannenhalli S."/>
            <person name="Turner R."/>
            <person name="Yooseph S."/>
            <person name="Lu F."/>
            <person name="Nusskern D.R."/>
            <person name="Shue B.C."/>
            <person name="Zheng X.H."/>
            <person name="Zhong F."/>
            <person name="Delcher A.L."/>
            <person name="Huson D.H."/>
            <person name="Kravitz S.A."/>
            <person name="Mouchard L."/>
            <person name="Reinert K."/>
            <person name="Remington K.A."/>
            <person name="Clark A.G."/>
            <person name="Waterman M.S."/>
            <person name="Eichler E.E."/>
            <person name="Adams M.D."/>
            <person name="Hunkapiller M.W."/>
            <person name="Myers E.W."/>
            <person name="Venter J.C."/>
        </authorList>
    </citation>
    <scope>NUCLEOTIDE SEQUENCE [LARGE SCALE GENOMIC DNA]</scope>
</reference>
<reference key="4">
    <citation type="journal article" date="2004" name="Genome Res.">
        <title>The status, quality, and expansion of the NIH full-length cDNA project: the Mammalian Gene Collection (MGC).</title>
        <authorList>
            <consortium name="The MGC Project Team"/>
        </authorList>
    </citation>
    <scope>NUCLEOTIDE SEQUENCE [LARGE SCALE MRNA]</scope>
    <source>
        <tissue>Ovary</tissue>
    </source>
</reference>
<reference key="5">
    <citation type="journal article" date="2002" name="J. Cell Biol.">
        <title>MAL2, a novel raft protein of the MAL family, is an essential component of the machinery for transcytosis in hepatoma HepG2 cells.</title>
        <authorList>
            <person name="de Marco M.C."/>
            <person name="Martin-Belmonte F."/>
            <person name="Kremer L."/>
            <person name="Albar J.P."/>
            <person name="Correas I."/>
            <person name="Vaerman J.P."/>
            <person name="Marazuela M."/>
            <person name="Byrne J.A."/>
            <person name="Alonso M.A."/>
        </authorList>
    </citation>
    <scope>FUNCTION</scope>
    <scope>SUBCELLULAR LOCATION</scope>
    <scope>GLYCOSYLATION AT ASN-132</scope>
</reference>
<reference key="6">
    <citation type="journal article" date="2004" name="Endocrinology">
        <title>Expression and distribution of MAL2, an essential element of the machinery for basolateral-to-apical transcytosis, in human thyroid epithelial cells.</title>
        <authorList>
            <person name="Marazuela M."/>
            <person name="Martin-Belmonte F."/>
            <person name="Garcia-Lopez M.A."/>
            <person name="Aranda J.F."/>
            <person name="de Marco M.C."/>
            <person name="Alonso M.A."/>
        </authorList>
    </citation>
    <scope>TISSUE SPECIFICITY</scope>
    <scope>SUBCELLULAR LOCATION</scope>
</reference>
<reference key="7">
    <citation type="journal article" date="2009" name="J. Proteome Res.">
        <title>Glycoproteomics analysis of human liver tissue by combination of multiple enzyme digestion and hydrazide chemistry.</title>
        <authorList>
            <person name="Chen R."/>
            <person name="Jiang X."/>
            <person name="Sun D."/>
            <person name="Han G."/>
            <person name="Wang F."/>
            <person name="Ye M."/>
            <person name="Wang L."/>
            <person name="Zou H."/>
        </authorList>
    </citation>
    <scope>GLYCOSYLATION [LARGE SCALE ANALYSIS] AT ASN-132</scope>
    <source>
        <tissue>Liver</tissue>
    </source>
</reference>
<evidence type="ECO:0000255" key="1"/>
<evidence type="ECO:0000255" key="2">
    <source>
        <dbReference type="PROSITE-ProRule" id="PRU00581"/>
    </source>
</evidence>
<evidence type="ECO:0000269" key="3">
    <source>
    </source>
</evidence>
<evidence type="ECO:0000269" key="4">
    <source>
    </source>
</evidence>
<evidence type="ECO:0000269" key="5">
    <source>
    </source>
</evidence>
<evidence type="ECO:0000269" key="6">
    <source>
    </source>
</evidence>
<evidence type="ECO:0000305" key="7"/>
<sequence length="176" mass="19125">MSAGGASVPPPPNPAVSFPPPRVTLPAGPDILRTYSGAFVCLEILFGGLVWILVASSNVPLPLLQGWVMFVSVTAFFFSLLFLGMFLSGMVAQIDANWNFLDFAYHFTVFVFYFGAFLLEAAATSLHDLHCNTTITGQPLLSDNQYNINVAASIFAFMTTACYGCSLGLALRRWRP</sequence>
<name>MAL2_HUMAN</name>
<feature type="chain" id="PRO_0000156808" description="Protein MAL2">
    <location>
        <begin position="1"/>
        <end position="176"/>
    </location>
</feature>
<feature type="topological domain" description="Cytoplasmic" evidence="1">
    <location>
        <begin position="1"/>
        <end position="34"/>
    </location>
</feature>
<feature type="transmembrane region" description="Helical" evidence="1">
    <location>
        <begin position="35"/>
        <end position="55"/>
    </location>
</feature>
<feature type="topological domain" description="Lumenal" evidence="1">
    <location>
        <begin position="56"/>
        <end position="66"/>
    </location>
</feature>
<feature type="transmembrane region" description="Helical" evidence="1">
    <location>
        <begin position="67"/>
        <end position="87"/>
    </location>
</feature>
<feature type="topological domain" description="Cytoplasmic" evidence="1">
    <location>
        <begin position="88"/>
        <end position="102"/>
    </location>
</feature>
<feature type="transmembrane region" description="Helical" evidence="1">
    <location>
        <begin position="103"/>
        <end position="123"/>
    </location>
</feature>
<feature type="topological domain" description="Lumenal" evidence="1">
    <location>
        <begin position="124"/>
        <end position="149"/>
    </location>
</feature>
<feature type="transmembrane region" description="Helical" evidence="1">
    <location>
        <begin position="150"/>
        <end position="170"/>
    </location>
</feature>
<feature type="topological domain" description="Cytoplasmic" evidence="1">
    <location>
        <begin position="171"/>
        <end position="176"/>
    </location>
</feature>
<feature type="domain" description="MARVEL" evidence="2">
    <location>
        <begin position="31"/>
        <end position="175"/>
    </location>
</feature>
<feature type="glycosylation site" description="N-linked (GlcNAc...) asparagine" evidence="4 6">
    <location>
        <position position="132"/>
    </location>
</feature>
<feature type="sequence variant" id="VAR_050016" description="In dbSNP:rs2303398.">
    <original>A</original>
    <variation>T</variation>
    <location>
        <position position="92"/>
    </location>
</feature>
<dbReference type="EMBL" id="AY007723">
    <property type="protein sequence ID" value="AAG15576.1"/>
    <property type="molecule type" value="mRNA"/>
</dbReference>
<dbReference type="EMBL" id="AK172820">
    <property type="protein sequence ID" value="BAD18789.1"/>
    <property type="status" value="ALT_FRAME"/>
    <property type="molecule type" value="mRNA"/>
</dbReference>
<dbReference type="EMBL" id="AK312030">
    <property type="protein sequence ID" value="BAG34967.1"/>
    <property type="molecule type" value="mRNA"/>
</dbReference>
<dbReference type="EMBL" id="CH471060">
    <property type="protein sequence ID" value="EAW91981.1"/>
    <property type="molecule type" value="Genomic_DNA"/>
</dbReference>
<dbReference type="EMBL" id="BC012367">
    <property type="protein sequence ID" value="AAH12367.1"/>
    <property type="molecule type" value="mRNA"/>
</dbReference>
<dbReference type="CCDS" id="CCDS75780.1"/>
<dbReference type="RefSeq" id="NP_443118.1">
    <property type="nucleotide sequence ID" value="NM_052886.3"/>
</dbReference>
<dbReference type="SMR" id="Q969L2"/>
<dbReference type="BioGRID" id="125321">
    <property type="interactions" value="56"/>
</dbReference>
<dbReference type="FunCoup" id="Q969L2">
    <property type="interactions" value="86"/>
</dbReference>
<dbReference type="IntAct" id="Q969L2">
    <property type="interactions" value="55"/>
</dbReference>
<dbReference type="STRING" id="9606.ENSP00000479708"/>
<dbReference type="GlyCosmos" id="Q969L2">
    <property type="glycosylation" value="1 site, No reported glycans"/>
</dbReference>
<dbReference type="GlyGen" id="Q969L2">
    <property type="glycosylation" value="1 site"/>
</dbReference>
<dbReference type="iPTMnet" id="Q969L2"/>
<dbReference type="PhosphoSitePlus" id="Q969L2"/>
<dbReference type="SwissPalm" id="Q969L2"/>
<dbReference type="BioMuta" id="MAL2"/>
<dbReference type="DMDM" id="21263778"/>
<dbReference type="jPOST" id="Q969L2"/>
<dbReference type="MassIVE" id="Q969L2"/>
<dbReference type="PaxDb" id="9606-ENSP00000479708"/>
<dbReference type="PeptideAtlas" id="Q969L2"/>
<dbReference type="ProteomicsDB" id="75788"/>
<dbReference type="Pumba" id="Q969L2"/>
<dbReference type="Antibodypedia" id="26765">
    <property type="antibodies" value="28 antibodies from 8 providers"/>
</dbReference>
<dbReference type="DNASU" id="114569"/>
<dbReference type="Ensembl" id="ENST00000614891.5">
    <property type="protein sequence ID" value="ENSP00000479708.1"/>
    <property type="gene ID" value="ENSG00000147676.14"/>
</dbReference>
<dbReference type="GeneID" id="114569"/>
<dbReference type="KEGG" id="hsa:114569"/>
<dbReference type="MANE-Select" id="ENST00000614891.5">
    <property type="protein sequence ID" value="ENSP00000479708.1"/>
    <property type="RefSeq nucleotide sequence ID" value="NM_052886.3"/>
    <property type="RefSeq protein sequence ID" value="NP_443118.1"/>
</dbReference>
<dbReference type="UCSC" id="uc033bxh.1">
    <property type="organism name" value="human"/>
</dbReference>
<dbReference type="AGR" id="HGNC:13634"/>
<dbReference type="CTD" id="114569"/>
<dbReference type="DisGeNET" id="114569"/>
<dbReference type="GeneCards" id="MAL2"/>
<dbReference type="HGNC" id="HGNC:13634">
    <property type="gene designation" value="MAL2"/>
</dbReference>
<dbReference type="HPA" id="ENSG00000147676">
    <property type="expression patterns" value="Tissue enhanced (esophagus)"/>
</dbReference>
<dbReference type="MIM" id="609684">
    <property type="type" value="gene"/>
</dbReference>
<dbReference type="neXtProt" id="NX_Q969L2"/>
<dbReference type="OpenTargets" id="ENSG00000147676"/>
<dbReference type="PharmGKB" id="PA30566"/>
<dbReference type="VEuPathDB" id="HostDB:ENSG00000147676"/>
<dbReference type="eggNOG" id="KOG4788">
    <property type="taxonomic scope" value="Eukaryota"/>
</dbReference>
<dbReference type="GeneTree" id="ENSGT00940000159514"/>
<dbReference type="HOGENOM" id="CLU_112950_2_0_1"/>
<dbReference type="InParanoid" id="Q969L2"/>
<dbReference type="OMA" id="TTVCYGC"/>
<dbReference type="OrthoDB" id="8877859at2759"/>
<dbReference type="PAN-GO" id="Q969L2">
    <property type="GO annotations" value="3 GO annotations based on evolutionary models"/>
</dbReference>
<dbReference type="PhylomeDB" id="Q969L2"/>
<dbReference type="PathwayCommons" id="Q969L2"/>
<dbReference type="SignaLink" id="Q969L2"/>
<dbReference type="BioGRID-ORCS" id="114569">
    <property type="hits" value="9 hits in 296 CRISPR screens"/>
</dbReference>
<dbReference type="ChiTaRS" id="MAL2">
    <property type="organism name" value="human"/>
</dbReference>
<dbReference type="GeneWiki" id="MAL2_(gene)"/>
<dbReference type="GenomeRNAi" id="114569"/>
<dbReference type="Pharos" id="Q969L2">
    <property type="development level" value="Tbio"/>
</dbReference>
<dbReference type="PRO" id="PR:Q969L2"/>
<dbReference type="Proteomes" id="UP000005640">
    <property type="component" value="Chromosome 8"/>
</dbReference>
<dbReference type="RNAct" id="Q969L2">
    <property type="molecule type" value="protein"/>
</dbReference>
<dbReference type="Bgee" id="ENSG00000147676">
    <property type="expression patterns" value="Expressed in upper arm skin and 175 other cell types or tissues"/>
</dbReference>
<dbReference type="ExpressionAtlas" id="Q969L2">
    <property type="expression patterns" value="baseline and differential"/>
</dbReference>
<dbReference type="GO" id="GO:0016324">
    <property type="term" value="C:apical plasma membrane"/>
    <property type="evidence" value="ECO:0007669"/>
    <property type="project" value="UniProtKB-SubCell"/>
</dbReference>
<dbReference type="GO" id="GO:0012505">
    <property type="term" value="C:endomembrane system"/>
    <property type="evidence" value="ECO:0007669"/>
    <property type="project" value="UniProtKB-SubCell"/>
</dbReference>
<dbReference type="GO" id="GO:0070062">
    <property type="term" value="C:extracellular exosome"/>
    <property type="evidence" value="ECO:0007005"/>
    <property type="project" value="UniProtKB"/>
</dbReference>
<dbReference type="GO" id="GO:0016020">
    <property type="term" value="C:membrane"/>
    <property type="evidence" value="ECO:0000318"/>
    <property type="project" value="GO_Central"/>
</dbReference>
<dbReference type="GO" id="GO:0045121">
    <property type="term" value="C:membrane raft"/>
    <property type="evidence" value="ECO:0000314"/>
    <property type="project" value="UniProtKB"/>
</dbReference>
<dbReference type="GO" id="GO:0048471">
    <property type="term" value="C:perinuclear region of cytoplasm"/>
    <property type="evidence" value="ECO:0007669"/>
    <property type="project" value="UniProtKB-SubCell"/>
</dbReference>
<dbReference type="GO" id="GO:0019911">
    <property type="term" value="F:structural constituent of myelin sheath"/>
    <property type="evidence" value="ECO:0000318"/>
    <property type="project" value="GO_Central"/>
</dbReference>
<dbReference type="GO" id="GO:0042552">
    <property type="term" value="P:myelination"/>
    <property type="evidence" value="ECO:0000318"/>
    <property type="project" value="GO_Central"/>
</dbReference>
<dbReference type="InterPro" id="IPR013295">
    <property type="entry name" value="MAL"/>
</dbReference>
<dbReference type="InterPro" id="IPR008253">
    <property type="entry name" value="Marvel"/>
</dbReference>
<dbReference type="InterPro" id="IPR050578">
    <property type="entry name" value="MARVEL-CKLF_proteins"/>
</dbReference>
<dbReference type="PANTHER" id="PTHR22776">
    <property type="entry name" value="MARVEL-CONTAINING POTENTIAL LIPID RAFT-ASSOCIATED PROTEIN"/>
    <property type="match status" value="1"/>
</dbReference>
<dbReference type="PANTHER" id="PTHR22776:SF42">
    <property type="entry name" value="PROTEIN MAL2"/>
    <property type="match status" value="1"/>
</dbReference>
<dbReference type="Pfam" id="PF01284">
    <property type="entry name" value="MARVEL"/>
    <property type="match status" value="1"/>
</dbReference>
<dbReference type="PRINTS" id="PR01884">
    <property type="entry name" value="MALPROTEIN"/>
</dbReference>
<dbReference type="PROSITE" id="PS51225">
    <property type="entry name" value="MARVEL"/>
    <property type="match status" value="1"/>
</dbReference>
<organism>
    <name type="scientific">Homo sapiens</name>
    <name type="common">Human</name>
    <dbReference type="NCBI Taxonomy" id="9606"/>
    <lineage>
        <taxon>Eukaryota</taxon>
        <taxon>Metazoa</taxon>
        <taxon>Chordata</taxon>
        <taxon>Craniata</taxon>
        <taxon>Vertebrata</taxon>
        <taxon>Euteleostomi</taxon>
        <taxon>Mammalia</taxon>
        <taxon>Eutheria</taxon>
        <taxon>Euarchontoglires</taxon>
        <taxon>Primates</taxon>
        <taxon>Haplorrhini</taxon>
        <taxon>Catarrhini</taxon>
        <taxon>Hominidae</taxon>
        <taxon>Homo</taxon>
    </lineage>
</organism>
<keyword id="KW-1003">Cell membrane</keyword>
<keyword id="KW-0963">Cytoplasm</keyword>
<keyword id="KW-0325">Glycoprotein</keyword>
<keyword id="KW-0472">Membrane</keyword>
<keyword id="KW-1267">Proteomics identification</keyword>
<keyword id="KW-1185">Reference proteome</keyword>
<keyword id="KW-0812">Transmembrane</keyword>
<keyword id="KW-1133">Transmembrane helix</keyword>
<protein>
    <recommendedName>
        <fullName>Protein MAL2</fullName>
    </recommendedName>
</protein>